<reference key="1">
    <citation type="journal article" date="2009" name="Appl. Environ. Microbiol.">
        <title>Rhizobium sp. strain NGR234 possesses a remarkable number of secretion systems.</title>
        <authorList>
            <person name="Schmeisser C."/>
            <person name="Liesegang H."/>
            <person name="Krysciak D."/>
            <person name="Bakkou N."/>
            <person name="Le Quere A."/>
            <person name="Wollherr A."/>
            <person name="Heinemeyer I."/>
            <person name="Morgenstern B."/>
            <person name="Pommerening-Roeser A."/>
            <person name="Flores M."/>
            <person name="Palacios R."/>
            <person name="Brenner S."/>
            <person name="Gottschalk G."/>
            <person name="Schmitz R.A."/>
            <person name="Broughton W.J."/>
            <person name="Perret X."/>
            <person name="Strittmatter A.W."/>
            <person name="Streit W.R."/>
        </authorList>
    </citation>
    <scope>NUCLEOTIDE SEQUENCE [LARGE SCALE GENOMIC DNA]</scope>
    <source>
        <strain>NBRC 101917 / NGR234</strain>
    </source>
</reference>
<sequence length="699" mass="77787">MAREYKIEDYRNFGIMAHIDAGKTTTTERILYYTGKSHKIGEVHDGAATMDWMEQEQERGITITSAATTTFWKGRDGKMRRFNIIDTPGHVDFTIEVERSLRVLDGAIALLDANAGVEPQTETVWRQAEKYNVPRMIFCNKMDKTGADFYRSVEMIKTRLGATAVVMQLPIGAESEFKGVVDLIEMNALVWRDESLGAQWDVVEIPADMKDKAEEYREKLIETVVEIDEAAMEAYLEGTYPDNDKIRELVRRGTIDVKFHPMFCGTAFKNKGVQPLLDAVVDYLPSPIDIPAIKGIDVKTEGEITRKADDNEPLSMLAFKIMNDPFVGSLTFARIYSGKLEKGTSVMNTVKEKRERVGRMLQMHSNSREDIEEAFAGDIVALAGLKETTTGDTLCDPLKPVILERMEFPEPVIQIAIEPKTKGDQEKMGLALNRLAAEDPSFRVKTDEESGQTIIAGMGELHLDIIVDRMRREFKVEASVGAPQVAYRETITRQHEEDYTHKKQSGGTGQFARVKIVFEPNPEGEDFAFESKIVGGAVPKEYIPGVQKGIESVLSSGPLAGFPMLGVKATLIDGAFHDVDSSVLAFEIASRACFREAAKKAGAQLLEPIMKVEVVTPEDYVGDVIGDLNSRRGQIQGQESRGVAVVINAHVPLANMFKYVDNLRSMSQGRAQYTMLFDHYAPVPSNVAQEIQAKYSGQK</sequence>
<name>EFG_SINFN</name>
<evidence type="ECO:0000255" key="1">
    <source>
        <dbReference type="HAMAP-Rule" id="MF_00054"/>
    </source>
</evidence>
<gene>
    <name evidence="1" type="primary">fusA</name>
    <name type="ordered locus">NGR_c11880</name>
</gene>
<dbReference type="EMBL" id="CP001389">
    <property type="protein sequence ID" value="ACP24970.1"/>
    <property type="molecule type" value="Genomic_DNA"/>
</dbReference>
<dbReference type="RefSeq" id="WP_012707752.1">
    <property type="nucleotide sequence ID" value="NC_012587.1"/>
</dbReference>
<dbReference type="RefSeq" id="YP_002825723.1">
    <property type="nucleotide sequence ID" value="NC_012587.1"/>
</dbReference>
<dbReference type="SMR" id="C3MAX7"/>
<dbReference type="STRING" id="394.NGR_c11880"/>
<dbReference type="KEGG" id="rhi:NGR_c11880"/>
<dbReference type="PATRIC" id="fig|394.7.peg.4004"/>
<dbReference type="eggNOG" id="COG0480">
    <property type="taxonomic scope" value="Bacteria"/>
</dbReference>
<dbReference type="HOGENOM" id="CLU_002794_4_1_5"/>
<dbReference type="OrthoDB" id="9802948at2"/>
<dbReference type="Proteomes" id="UP000001054">
    <property type="component" value="Chromosome"/>
</dbReference>
<dbReference type="GO" id="GO:0005737">
    <property type="term" value="C:cytoplasm"/>
    <property type="evidence" value="ECO:0007669"/>
    <property type="project" value="UniProtKB-SubCell"/>
</dbReference>
<dbReference type="GO" id="GO:0005525">
    <property type="term" value="F:GTP binding"/>
    <property type="evidence" value="ECO:0007669"/>
    <property type="project" value="UniProtKB-UniRule"/>
</dbReference>
<dbReference type="GO" id="GO:0003924">
    <property type="term" value="F:GTPase activity"/>
    <property type="evidence" value="ECO:0007669"/>
    <property type="project" value="InterPro"/>
</dbReference>
<dbReference type="GO" id="GO:0003746">
    <property type="term" value="F:translation elongation factor activity"/>
    <property type="evidence" value="ECO:0007669"/>
    <property type="project" value="UniProtKB-UniRule"/>
</dbReference>
<dbReference type="GO" id="GO:0032790">
    <property type="term" value="P:ribosome disassembly"/>
    <property type="evidence" value="ECO:0007669"/>
    <property type="project" value="TreeGrafter"/>
</dbReference>
<dbReference type="CDD" id="cd01886">
    <property type="entry name" value="EF-G"/>
    <property type="match status" value="1"/>
</dbReference>
<dbReference type="CDD" id="cd16262">
    <property type="entry name" value="EFG_III"/>
    <property type="match status" value="1"/>
</dbReference>
<dbReference type="CDD" id="cd01434">
    <property type="entry name" value="EFG_mtEFG1_IV"/>
    <property type="match status" value="1"/>
</dbReference>
<dbReference type="CDD" id="cd03713">
    <property type="entry name" value="EFG_mtEFG_C"/>
    <property type="match status" value="1"/>
</dbReference>
<dbReference type="CDD" id="cd04088">
    <property type="entry name" value="EFG_mtEFG_II"/>
    <property type="match status" value="1"/>
</dbReference>
<dbReference type="FunFam" id="2.40.30.10:FF:000006">
    <property type="entry name" value="Elongation factor G"/>
    <property type="match status" value="1"/>
</dbReference>
<dbReference type="FunFam" id="3.30.230.10:FF:000003">
    <property type="entry name" value="Elongation factor G"/>
    <property type="match status" value="1"/>
</dbReference>
<dbReference type="FunFam" id="3.30.70.240:FF:000001">
    <property type="entry name" value="Elongation factor G"/>
    <property type="match status" value="1"/>
</dbReference>
<dbReference type="FunFam" id="3.30.70.870:FF:000001">
    <property type="entry name" value="Elongation factor G"/>
    <property type="match status" value="1"/>
</dbReference>
<dbReference type="FunFam" id="3.40.50.300:FF:000029">
    <property type="entry name" value="Elongation factor G"/>
    <property type="match status" value="1"/>
</dbReference>
<dbReference type="Gene3D" id="3.30.230.10">
    <property type="match status" value="1"/>
</dbReference>
<dbReference type="Gene3D" id="3.30.70.240">
    <property type="match status" value="1"/>
</dbReference>
<dbReference type="Gene3D" id="3.30.70.870">
    <property type="entry name" value="Elongation Factor G (Translational Gtpase), domain 3"/>
    <property type="match status" value="1"/>
</dbReference>
<dbReference type="Gene3D" id="3.40.50.300">
    <property type="entry name" value="P-loop containing nucleotide triphosphate hydrolases"/>
    <property type="match status" value="1"/>
</dbReference>
<dbReference type="Gene3D" id="2.40.30.10">
    <property type="entry name" value="Translation factors"/>
    <property type="match status" value="1"/>
</dbReference>
<dbReference type="HAMAP" id="MF_00054_B">
    <property type="entry name" value="EF_G_EF_2_B"/>
    <property type="match status" value="1"/>
</dbReference>
<dbReference type="InterPro" id="IPR053905">
    <property type="entry name" value="EF-G-like_DII"/>
</dbReference>
<dbReference type="InterPro" id="IPR041095">
    <property type="entry name" value="EFG_II"/>
</dbReference>
<dbReference type="InterPro" id="IPR009022">
    <property type="entry name" value="EFG_III"/>
</dbReference>
<dbReference type="InterPro" id="IPR035647">
    <property type="entry name" value="EFG_III/V"/>
</dbReference>
<dbReference type="InterPro" id="IPR047872">
    <property type="entry name" value="EFG_IV"/>
</dbReference>
<dbReference type="InterPro" id="IPR035649">
    <property type="entry name" value="EFG_V"/>
</dbReference>
<dbReference type="InterPro" id="IPR000640">
    <property type="entry name" value="EFG_V-like"/>
</dbReference>
<dbReference type="InterPro" id="IPR031157">
    <property type="entry name" value="G_TR_CS"/>
</dbReference>
<dbReference type="InterPro" id="IPR027417">
    <property type="entry name" value="P-loop_NTPase"/>
</dbReference>
<dbReference type="InterPro" id="IPR020568">
    <property type="entry name" value="Ribosomal_Su5_D2-typ_SF"/>
</dbReference>
<dbReference type="InterPro" id="IPR014721">
    <property type="entry name" value="Ribsml_uS5_D2-typ_fold_subgr"/>
</dbReference>
<dbReference type="InterPro" id="IPR005225">
    <property type="entry name" value="Small_GTP-bd"/>
</dbReference>
<dbReference type="InterPro" id="IPR000795">
    <property type="entry name" value="T_Tr_GTP-bd_dom"/>
</dbReference>
<dbReference type="InterPro" id="IPR009000">
    <property type="entry name" value="Transl_B-barrel_sf"/>
</dbReference>
<dbReference type="InterPro" id="IPR004540">
    <property type="entry name" value="Transl_elong_EFG/EF2"/>
</dbReference>
<dbReference type="InterPro" id="IPR005517">
    <property type="entry name" value="Transl_elong_EFG/EF2_IV"/>
</dbReference>
<dbReference type="NCBIfam" id="TIGR00484">
    <property type="entry name" value="EF-G"/>
    <property type="match status" value="1"/>
</dbReference>
<dbReference type="NCBIfam" id="NF009381">
    <property type="entry name" value="PRK12740.1-5"/>
    <property type="match status" value="1"/>
</dbReference>
<dbReference type="NCBIfam" id="TIGR00231">
    <property type="entry name" value="small_GTP"/>
    <property type="match status" value="1"/>
</dbReference>
<dbReference type="PANTHER" id="PTHR43261:SF1">
    <property type="entry name" value="RIBOSOME-RELEASING FACTOR 2, MITOCHONDRIAL"/>
    <property type="match status" value="1"/>
</dbReference>
<dbReference type="PANTHER" id="PTHR43261">
    <property type="entry name" value="TRANSLATION ELONGATION FACTOR G-RELATED"/>
    <property type="match status" value="1"/>
</dbReference>
<dbReference type="Pfam" id="PF22042">
    <property type="entry name" value="EF-G_D2"/>
    <property type="match status" value="1"/>
</dbReference>
<dbReference type="Pfam" id="PF00679">
    <property type="entry name" value="EFG_C"/>
    <property type="match status" value="1"/>
</dbReference>
<dbReference type="Pfam" id="PF14492">
    <property type="entry name" value="EFG_III"/>
    <property type="match status" value="1"/>
</dbReference>
<dbReference type="Pfam" id="PF03764">
    <property type="entry name" value="EFG_IV"/>
    <property type="match status" value="1"/>
</dbReference>
<dbReference type="Pfam" id="PF00009">
    <property type="entry name" value="GTP_EFTU"/>
    <property type="match status" value="1"/>
</dbReference>
<dbReference type="PRINTS" id="PR00315">
    <property type="entry name" value="ELONGATNFCT"/>
</dbReference>
<dbReference type="SMART" id="SM00838">
    <property type="entry name" value="EFG_C"/>
    <property type="match status" value="1"/>
</dbReference>
<dbReference type="SMART" id="SM00889">
    <property type="entry name" value="EFG_IV"/>
    <property type="match status" value="1"/>
</dbReference>
<dbReference type="SUPFAM" id="SSF54980">
    <property type="entry name" value="EF-G C-terminal domain-like"/>
    <property type="match status" value="2"/>
</dbReference>
<dbReference type="SUPFAM" id="SSF52540">
    <property type="entry name" value="P-loop containing nucleoside triphosphate hydrolases"/>
    <property type="match status" value="1"/>
</dbReference>
<dbReference type="SUPFAM" id="SSF54211">
    <property type="entry name" value="Ribosomal protein S5 domain 2-like"/>
    <property type="match status" value="1"/>
</dbReference>
<dbReference type="SUPFAM" id="SSF50447">
    <property type="entry name" value="Translation proteins"/>
    <property type="match status" value="1"/>
</dbReference>
<dbReference type="PROSITE" id="PS00301">
    <property type="entry name" value="G_TR_1"/>
    <property type="match status" value="1"/>
</dbReference>
<dbReference type="PROSITE" id="PS51722">
    <property type="entry name" value="G_TR_2"/>
    <property type="match status" value="1"/>
</dbReference>
<protein>
    <recommendedName>
        <fullName evidence="1">Elongation factor G</fullName>
        <shortName evidence="1">EF-G</shortName>
    </recommendedName>
</protein>
<accession>C3MAX7</accession>
<comment type="function">
    <text evidence="1">Catalyzes the GTP-dependent ribosomal translocation step during translation elongation. During this step, the ribosome changes from the pre-translocational (PRE) to the post-translocational (POST) state as the newly formed A-site-bound peptidyl-tRNA and P-site-bound deacylated tRNA move to the P and E sites, respectively. Catalyzes the coordinated movement of the two tRNA molecules, the mRNA and conformational changes in the ribosome.</text>
</comment>
<comment type="subcellular location">
    <subcellularLocation>
        <location evidence="1">Cytoplasm</location>
    </subcellularLocation>
</comment>
<comment type="similarity">
    <text evidence="1">Belongs to the TRAFAC class translation factor GTPase superfamily. Classic translation factor GTPase family. EF-G/EF-2 subfamily.</text>
</comment>
<proteinExistence type="inferred from homology"/>
<organism>
    <name type="scientific">Sinorhizobium fredii (strain NBRC 101917 / NGR234)</name>
    <dbReference type="NCBI Taxonomy" id="394"/>
    <lineage>
        <taxon>Bacteria</taxon>
        <taxon>Pseudomonadati</taxon>
        <taxon>Pseudomonadota</taxon>
        <taxon>Alphaproteobacteria</taxon>
        <taxon>Hyphomicrobiales</taxon>
        <taxon>Rhizobiaceae</taxon>
        <taxon>Sinorhizobium/Ensifer group</taxon>
        <taxon>Sinorhizobium</taxon>
    </lineage>
</organism>
<keyword id="KW-0963">Cytoplasm</keyword>
<keyword id="KW-0251">Elongation factor</keyword>
<keyword id="KW-0342">GTP-binding</keyword>
<keyword id="KW-0547">Nucleotide-binding</keyword>
<keyword id="KW-0648">Protein biosynthesis</keyword>
<keyword id="KW-1185">Reference proteome</keyword>
<feature type="chain" id="PRO_1000201482" description="Elongation factor G">
    <location>
        <begin position="1"/>
        <end position="699"/>
    </location>
</feature>
<feature type="domain" description="tr-type G">
    <location>
        <begin position="8"/>
        <end position="288"/>
    </location>
</feature>
<feature type="binding site" evidence="1">
    <location>
        <begin position="17"/>
        <end position="24"/>
    </location>
    <ligand>
        <name>GTP</name>
        <dbReference type="ChEBI" id="CHEBI:37565"/>
    </ligand>
</feature>
<feature type="binding site" evidence="1">
    <location>
        <begin position="86"/>
        <end position="90"/>
    </location>
    <ligand>
        <name>GTP</name>
        <dbReference type="ChEBI" id="CHEBI:37565"/>
    </ligand>
</feature>
<feature type="binding site" evidence="1">
    <location>
        <begin position="140"/>
        <end position="143"/>
    </location>
    <ligand>
        <name>GTP</name>
        <dbReference type="ChEBI" id="CHEBI:37565"/>
    </ligand>
</feature>